<geneLocation type="chloroplast"/>
<sequence>MNISNQLSLEQEFELVLYKQKIEPLNLEQSRNLLAETLRTMLLKDNIIKYVIKNSHFSQ</sequence>
<protein>
    <recommendedName>
        <fullName>Uncharacterized protein ycf18</fullName>
    </recommendedName>
</protein>
<organism>
    <name type="scientific">Pyropia yezoensis</name>
    <name type="common">Susabi-nori</name>
    <name type="synonym">Porphyra yezoensis</name>
    <dbReference type="NCBI Taxonomy" id="2788"/>
    <lineage>
        <taxon>Eukaryota</taxon>
        <taxon>Rhodophyta</taxon>
        <taxon>Bangiophyceae</taxon>
        <taxon>Bangiales</taxon>
        <taxon>Bangiaceae</taxon>
        <taxon>Pyropia</taxon>
    </lineage>
</organism>
<feature type="chain" id="PRO_0000277266" description="Uncharacterized protein ycf18">
    <location>
        <begin position="1"/>
        <end position="59"/>
    </location>
</feature>
<proteinExistence type="inferred from homology"/>
<evidence type="ECO:0000305" key="1"/>
<accession>Q1XDC1</accession>
<keyword id="KW-0150">Chloroplast</keyword>
<keyword id="KW-0934">Plastid</keyword>
<comment type="subcellular location">
    <subcellularLocation>
        <location>Plastid</location>
        <location>Chloroplast</location>
    </subcellularLocation>
</comment>
<comment type="similarity">
    <text evidence="1">Belongs to the ycf18/nblA family.</text>
</comment>
<dbReference type="EMBL" id="AP006715">
    <property type="protein sequence ID" value="BAE92490.1"/>
    <property type="molecule type" value="Genomic_DNA"/>
</dbReference>
<dbReference type="RefSeq" id="YP_537047.1">
    <property type="nucleotide sequence ID" value="NC_007932.1"/>
</dbReference>
<dbReference type="SMR" id="Q1XDC1"/>
<dbReference type="GO" id="GO:0009507">
    <property type="term" value="C:chloroplast"/>
    <property type="evidence" value="ECO:0007669"/>
    <property type="project" value="UniProtKB-SubCell"/>
</dbReference>
<dbReference type="Gene3D" id="1.10.287.670">
    <property type="entry name" value="Phycobilisome degradation protein NblA"/>
    <property type="match status" value="1"/>
</dbReference>
<dbReference type="InterPro" id="IPR007574">
    <property type="entry name" value="NblA"/>
</dbReference>
<dbReference type="InterPro" id="IPR036904">
    <property type="entry name" value="NblA_sf"/>
</dbReference>
<dbReference type="Pfam" id="PF04485">
    <property type="entry name" value="NblA"/>
    <property type="match status" value="1"/>
</dbReference>
<dbReference type="SUPFAM" id="SSF109859">
    <property type="entry name" value="NblA-like"/>
    <property type="match status" value="1"/>
</dbReference>
<name>YCF18_PYRYE</name>
<reference key="1">
    <citation type="submission" date="2003-11" db="EMBL/GenBank/DDBJ databases">
        <title>Whole genome sequence of Porphyra yezoensis chloroplast.</title>
        <authorList>
            <person name="Kunimoto M."/>
            <person name="Morishima K."/>
            <person name="Yoshikawa M."/>
            <person name="Fukuda S."/>
            <person name="Kobayashi T."/>
            <person name="Kobayashi M."/>
            <person name="Okazaki T."/>
            <person name="Ohara I."/>
            <person name="Nakayama I."/>
        </authorList>
    </citation>
    <scope>NUCLEOTIDE SEQUENCE [LARGE SCALE GENOMIC DNA]</scope>
    <source>
        <strain>U-51</strain>
    </source>
</reference>
<gene>
    <name type="primary">ycf18</name>
</gene>